<accession>Q5TH74</accession>
<accession>Q49AP0</accession>
<accession>Q6P3R4</accession>
<accession>Q86VU9</accession>
<accession>Q8WVQ3</accession>
<organism>
    <name type="scientific">Homo sapiens</name>
    <name type="common">Human</name>
    <dbReference type="NCBI Taxonomy" id="9606"/>
    <lineage>
        <taxon>Eukaryota</taxon>
        <taxon>Metazoa</taxon>
        <taxon>Chordata</taxon>
        <taxon>Craniata</taxon>
        <taxon>Vertebrata</taxon>
        <taxon>Euteleostomi</taxon>
        <taxon>Mammalia</taxon>
        <taxon>Eutheria</taxon>
        <taxon>Euarchontoglires</taxon>
        <taxon>Primates</taxon>
        <taxon>Haplorrhini</taxon>
        <taxon>Catarrhini</taxon>
        <taxon>Hominidae</taxon>
        <taxon>Homo</taxon>
    </lineage>
</organism>
<reference key="1">
    <citation type="journal article" date="2006" name="Nature">
        <title>The DNA sequence and biological annotation of human chromosome 1.</title>
        <authorList>
            <person name="Gregory S.G."/>
            <person name="Barlow K.F."/>
            <person name="McLay K.E."/>
            <person name="Kaul R."/>
            <person name="Swarbreck D."/>
            <person name="Dunham A."/>
            <person name="Scott C.E."/>
            <person name="Howe K.L."/>
            <person name="Woodfine K."/>
            <person name="Spencer C.C.A."/>
            <person name="Jones M.C."/>
            <person name="Gillson C."/>
            <person name="Searle S."/>
            <person name="Zhou Y."/>
            <person name="Kokocinski F."/>
            <person name="McDonald L."/>
            <person name="Evans R."/>
            <person name="Phillips K."/>
            <person name="Atkinson A."/>
            <person name="Cooper R."/>
            <person name="Jones C."/>
            <person name="Hall R.E."/>
            <person name="Andrews T.D."/>
            <person name="Lloyd C."/>
            <person name="Ainscough R."/>
            <person name="Almeida J.P."/>
            <person name="Ambrose K.D."/>
            <person name="Anderson F."/>
            <person name="Andrew R.W."/>
            <person name="Ashwell R.I.S."/>
            <person name="Aubin K."/>
            <person name="Babbage A.K."/>
            <person name="Bagguley C.L."/>
            <person name="Bailey J."/>
            <person name="Beasley H."/>
            <person name="Bethel G."/>
            <person name="Bird C.P."/>
            <person name="Bray-Allen S."/>
            <person name="Brown J.Y."/>
            <person name="Brown A.J."/>
            <person name="Buckley D."/>
            <person name="Burton J."/>
            <person name="Bye J."/>
            <person name="Carder C."/>
            <person name="Chapman J.C."/>
            <person name="Clark S.Y."/>
            <person name="Clarke G."/>
            <person name="Clee C."/>
            <person name="Cobley V."/>
            <person name="Collier R.E."/>
            <person name="Corby N."/>
            <person name="Coville G.J."/>
            <person name="Davies J."/>
            <person name="Deadman R."/>
            <person name="Dunn M."/>
            <person name="Earthrowl M."/>
            <person name="Ellington A.G."/>
            <person name="Errington H."/>
            <person name="Frankish A."/>
            <person name="Frankland J."/>
            <person name="French L."/>
            <person name="Garner P."/>
            <person name="Garnett J."/>
            <person name="Gay L."/>
            <person name="Ghori M.R.J."/>
            <person name="Gibson R."/>
            <person name="Gilby L.M."/>
            <person name="Gillett W."/>
            <person name="Glithero R.J."/>
            <person name="Grafham D.V."/>
            <person name="Griffiths C."/>
            <person name="Griffiths-Jones S."/>
            <person name="Grocock R."/>
            <person name="Hammond S."/>
            <person name="Harrison E.S.I."/>
            <person name="Hart E."/>
            <person name="Haugen E."/>
            <person name="Heath P.D."/>
            <person name="Holmes S."/>
            <person name="Holt K."/>
            <person name="Howden P.J."/>
            <person name="Hunt A.R."/>
            <person name="Hunt S.E."/>
            <person name="Hunter G."/>
            <person name="Isherwood J."/>
            <person name="James R."/>
            <person name="Johnson C."/>
            <person name="Johnson D."/>
            <person name="Joy A."/>
            <person name="Kay M."/>
            <person name="Kershaw J.K."/>
            <person name="Kibukawa M."/>
            <person name="Kimberley A.M."/>
            <person name="King A."/>
            <person name="Knights A.J."/>
            <person name="Lad H."/>
            <person name="Laird G."/>
            <person name="Lawlor S."/>
            <person name="Leongamornlert D.A."/>
            <person name="Lloyd D.M."/>
            <person name="Loveland J."/>
            <person name="Lovell J."/>
            <person name="Lush M.J."/>
            <person name="Lyne R."/>
            <person name="Martin S."/>
            <person name="Mashreghi-Mohammadi M."/>
            <person name="Matthews L."/>
            <person name="Matthews N.S.W."/>
            <person name="McLaren S."/>
            <person name="Milne S."/>
            <person name="Mistry S."/>
            <person name="Moore M.J.F."/>
            <person name="Nickerson T."/>
            <person name="O'Dell C.N."/>
            <person name="Oliver K."/>
            <person name="Palmeiri A."/>
            <person name="Palmer S.A."/>
            <person name="Parker A."/>
            <person name="Patel D."/>
            <person name="Pearce A.V."/>
            <person name="Peck A.I."/>
            <person name="Pelan S."/>
            <person name="Phelps K."/>
            <person name="Phillimore B.J."/>
            <person name="Plumb R."/>
            <person name="Rajan J."/>
            <person name="Raymond C."/>
            <person name="Rouse G."/>
            <person name="Saenphimmachak C."/>
            <person name="Sehra H.K."/>
            <person name="Sheridan E."/>
            <person name="Shownkeen R."/>
            <person name="Sims S."/>
            <person name="Skuce C.D."/>
            <person name="Smith M."/>
            <person name="Steward C."/>
            <person name="Subramanian S."/>
            <person name="Sycamore N."/>
            <person name="Tracey A."/>
            <person name="Tromans A."/>
            <person name="Van Helmond Z."/>
            <person name="Wall M."/>
            <person name="Wallis J.M."/>
            <person name="White S."/>
            <person name="Whitehead S.L."/>
            <person name="Wilkinson J.E."/>
            <person name="Willey D.L."/>
            <person name="Williams H."/>
            <person name="Wilming L."/>
            <person name="Wray P.W."/>
            <person name="Wu Z."/>
            <person name="Coulson A."/>
            <person name="Vaudin M."/>
            <person name="Sulston J.E."/>
            <person name="Durbin R.M."/>
            <person name="Hubbard T."/>
            <person name="Wooster R."/>
            <person name="Dunham I."/>
            <person name="Carter N.P."/>
            <person name="McVean G."/>
            <person name="Ross M.T."/>
            <person name="Harrow J."/>
            <person name="Olson M.V."/>
            <person name="Beck S."/>
            <person name="Rogers J."/>
            <person name="Bentley D.R."/>
        </authorList>
    </citation>
    <scope>NUCLEOTIDE SEQUENCE [LARGE SCALE GENOMIC DNA]</scope>
</reference>
<reference key="2">
    <citation type="journal article" date="2004" name="Genome Res.">
        <title>The status, quality, and expansion of the NIH full-length cDNA project: the Mammalian Gene Collection (MGC).</title>
        <authorList>
            <consortium name="The MGC Project Team"/>
        </authorList>
    </citation>
    <scope>NUCLEOTIDE SEQUENCE [LARGE SCALE MRNA] (ISOFORMS 2 AND 3)</scope>
    <source>
        <tissue>Brain</tissue>
        <tissue>Lung</tissue>
        <tissue>Testis</tissue>
    </source>
</reference>
<reference key="3">
    <citation type="journal article" date="2009" name="Sci. Signal.">
        <title>Quantitative phosphoproteomic analysis of T cell receptor signaling reveals system-wide modulation of protein-protein interactions.</title>
        <authorList>
            <person name="Mayya V."/>
            <person name="Lundgren D.H."/>
            <person name="Hwang S.-I."/>
            <person name="Rezaul K."/>
            <person name="Wu L."/>
            <person name="Eng J.K."/>
            <person name="Rodionov V."/>
            <person name="Han D.K."/>
        </authorList>
    </citation>
    <scope>PHOSPHORYLATION [LARGE SCALE ANALYSIS] AT TYR-72</scope>
    <scope>IDENTIFICATION BY MASS SPECTROMETRY [LARGE SCALE ANALYSIS]</scope>
    <source>
        <tissue>Leukemic T-cell</tissue>
    </source>
</reference>
<reference key="4">
    <citation type="journal article" date="2012" name="PLoS ONE">
        <title>The identification of a novel gene, MAPO2, that is involved in the induction of apoptosis triggered by O(6)-methylguanine.</title>
        <authorList>
            <person name="Fujikane R."/>
            <person name="Sanada M."/>
            <person name="Sekiguchi M."/>
            <person name="Hidaka M."/>
        </authorList>
    </citation>
    <scope>FUNCTION</scope>
</reference>
<reference key="5">
    <citation type="journal article" date="2006" name="Science">
        <title>The consensus coding sequences of human breast and colorectal cancers.</title>
        <authorList>
            <person name="Sjoeblom T."/>
            <person name="Jones S."/>
            <person name="Wood L.D."/>
            <person name="Parsons D.W."/>
            <person name="Lin J."/>
            <person name="Barber T.D."/>
            <person name="Mandelker D."/>
            <person name="Leary R.J."/>
            <person name="Ptak J."/>
            <person name="Silliman N."/>
            <person name="Szabo S."/>
            <person name="Buckhaults P."/>
            <person name="Farrell C."/>
            <person name="Meeh P."/>
            <person name="Markowitz S.D."/>
            <person name="Willis J."/>
            <person name="Dawson D."/>
            <person name="Willson J.K.V."/>
            <person name="Gazdar A.F."/>
            <person name="Hartigan J."/>
            <person name="Wu L."/>
            <person name="Liu C."/>
            <person name="Parmigiani G."/>
            <person name="Park B.H."/>
            <person name="Bachman K.E."/>
            <person name="Papadopoulos N."/>
            <person name="Vogelstein B."/>
            <person name="Kinzler K.W."/>
            <person name="Velculescu V.E."/>
        </authorList>
    </citation>
    <scope>VARIANT [LARGE SCALE ANALYSIS] PHE-254</scope>
</reference>
<keyword id="KW-0025">Alternative splicing</keyword>
<keyword id="KW-0053">Apoptosis</keyword>
<keyword id="KW-0963">Cytoplasm</keyword>
<keyword id="KW-0539">Nucleus</keyword>
<keyword id="KW-0597">Phosphoprotein</keyword>
<keyword id="KW-1267">Proteomics identification</keyword>
<keyword id="KW-1185">Reference proteome</keyword>
<keyword id="KW-0677">Repeat</keyword>
<dbReference type="EMBL" id="AL031431">
    <property type="status" value="NOT_ANNOTATED_CDS"/>
    <property type="molecule type" value="Genomic_DNA"/>
</dbReference>
<dbReference type="EMBL" id="BC017650">
    <property type="protein sequence ID" value="AAH17650.1"/>
    <property type="molecule type" value="mRNA"/>
</dbReference>
<dbReference type="EMBL" id="BC035061">
    <property type="protein sequence ID" value="AAH35061.1"/>
    <property type="molecule type" value="mRNA"/>
</dbReference>
<dbReference type="EMBL" id="BC047705">
    <property type="protein sequence ID" value="AAH47705.1"/>
    <property type="molecule type" value="mRNA"/>
</dbReference>
<dbReference type="EMBL" id="BC063891">
    <property type="protein sequence ID" value="AAH63891.1"/>
    <property type="molecule type" value="mRNA"/>
</dbReference>
<dbReference type="CCDS" id="CCDS253.1">
    <molecule id="Q5TH74-3"/>
</dbReference>
<dbReference type="CCDS" id="CCDS55581.1">
    <molecule id="Q5TH74-1"/>
</dbReference>
<dbReference type="RefSeq" id="NP_001185941.1">
    <molecule id="Q5TH74-1"/>
    <property type="nucleotide sequence ID" value="NM_001199012.2"/>
</dbReference>
<dbReference type="RefSeq" id="NP_001185942.1">
    <molecule id="Q5TH74-1"/>
    <property type="nucleotide sequence ID" value="NM_001199013.2"/>
</dbReference>
<dbReference type="RefSeq" id="NP_001185943.1">
    <molecule id="Q5TH74-2"/>
    <property type="nucleotide sequence ID" value="NM_001199014.2"/>
</dbReference>
<dbReference type="RefSeq" id="NP_835223.1">
    <molecule id="Q5TH74-3"/>
    <property type="nucleotide sequence ID" value="NM_178122.5"/>
</dbReference>
<dbReference type="RefSeq" id="XP_006711088.1">
    <property type="nucleotide sequence ID" value="XM_006711025.2"/>
</dbReference>
<dbReference type="RefSeq" id="XP_011540705.2">
    <molecule id="Q5TH74-3"/>
    <property type="nucleotide sequence ID" value="XM_011542403.3"/>
</dbReference>
<dbReference type="RefSeq" id="XP_011540706.1">
    <property type="nucleotide sequence ID" value="XM_011542404.1"/>
</dbReference>
<dbReference type="RefSeq" id="XP_016858257.1">
    <property type="nucleotide sequence ID" value="XM_017002768.1"/>
</dbReference>
<dbReference type="RefSeq" id="XP_016858258.1">
    <property type="nucleotide sequence ID" value="XM_017002769.1"/>
</dbReference>
<dbReference type="RefSeq" id="XP_016858259.1">
    <property type="nucleotide sequence ID" value="XM_017002770.1"/>
</dbReference>
<dbReference type="RefSeq" id="XP_047289637.1">
    <molecule id="Q5TH74-3"/>
    <property type="nucleotide sequence ID" value="XM_047433681.1"/>
</dbReference>
<dbReference type="BioGRID" id="124732">
    <property type="interactions" value="2"/>
</dbReference>
<dbReference type="FunCoup" id="Q5TH74">
    <property type="interactions" value="49"/>
</dbReference>
<dbReference type="IntAct" id="Q5TH74">
    <property type="interactions" value="2"/>
</dbReference>
<dbReference type="STRING" id="9606.ENSP00000363530"/>
<dbReference type="GlyGen" id="Q5TH74">
    <property type="glycosylation" value="2 sites, 1 O-linked glycan (2 sites)"/>
</dbReference>
<dbReference type="iPTMnet" id="Q5TH74"/>
<dbReference type="PhosphoSitePlus" id="Q5TH74"/>
<dbReference type="BioMuta" id="STPG1"/>
<dbReference type="DMDM" id="74746565"/>
<dbReference type="MassIVE" id="Q5TH74"/>
<dbReference type="PaxDb" id="9606-ENSP00000363530"/>
<dbReference type="PeptideAtlas" id="Q5TH74"/>
<dbReference type="ProteomicsDB" id="65145">
    <molecule id="Q5TH74-1"/>
</dbReference>
<dbReference type="ProteomicsDB" id="65146">
    <molecule id="Q5TH74-2"/>
</dbReference>
<dbReference type="ProteomicsDB" id="65147">
    <molecule id="Q5TH74-3"/>
</dbReference>
<dbReference type="Antibodypedia" id="15730">
    <property type="antibodies" value="17 antibodies from 11 providers"/>
</dbReference>
<dbReference type="DNASU" id="90529"/>
<dbReference type="Ensembl" id="ENST00000003583.12">
    <molecule id="Q5TH74-3"/>
    <property type="protein sequence ID" value="ENSP00000003583.8"/>
    <property type="gene ID" value="ENSG00000001460.18"/>
</dbReference>
<dbReference type="Ensembl" id="ENST00000337248.9">
    <molecule id="Q5TH74-1"/>
    <property type="protein sequence ID" value="ENSP00000337461.4"/>
    <property type="gene ID" value="ENSG00000001460.18"/>
</dbReference>
<dbReference type="Ensembl" id="ENST00000374409.5">
    <molecule id="Q5TH74-1"/>
    <property type="protein sequence ID" value="ENSP00000363530.1"/>
    <property type="gene ID" value="ENSG00000001460.18"/>
</dbReference>
<dbReference type="GeneID" id="90529"/>
<dbReference type="KEGG" id="hsa:90529"/>
<dbReference type="MANE-Select" id="ENST00000337248.9">
    <property type="protein sequence ID" value="ENSP00000337461.4"/>
    <property type="RefSeq nucleotide sequence ID" value="NM_001199013.2"/>
    <property type="RefSeq protein sequence ID" value="NP_001185942.1"/>
</dbReference>
<dbReference type="UCSC" id="uc001bja.4">
    <molecule id="Q5TH74-1"/>
    <property type="organism name" value="human"/>
</dbReference>
<dbReference type="AGR" id="HGNC:28070"/>
<dbReference type="CTD" id="90529"/>
<dbReference type="GeneCards" id="STPG1"/>
<dbReference type="HGNC" id="HGNC:28070">
    <property type="gene designation" value="STPG1"/>
</dbReference>
<dbReference type="HPA" id="ENSG00000001460">
    <property type="expression patterns" value="Tissue enhanced (testis)"/>
</dbReference>
<dbReference type="MIM" id="615826">
    <property type="type" value="gene"/>
</dbReference>
<dbReference type="neXtProt" id="NX_Q5TH74"/>
<dbReference type="OpenTargets" id="ENSG00000001460"/>
<dbReference type="PharmGKB" id="PA143485320"/>
<dbReference type="VEuPathDB" id="HostDB:ENSG00000001460"/>
<dbReference type="eggNOG" id="ENOG502R2KG">
    <property type="taxonomic scope" value="Eukaryota"/>
</dbReference>
<dbReference type="GeneTree" id="ENSGT00390000011598"/>
<dbReference type="HOGENOM" id="CLU_071847_0_0_1"/>
<dbReference type="InParanoid" id="Q5TH74"/>
<dbReference type="OMA" id="GQYENPI"/>
<dbReference type="OrthoDB" id="186871at2759"/>
<dbReference type="PAN-GO" id="Q5TH74">
    <property type="GO annotations" value="1 GO annotation based on evolutionary models"/>
</dbReference>
<dbReference type="PhylomeDB" id="Q5TH74"/>
<dbReference type="TreeFam" id="TF328937"/>
<dbReference type="PathwayCommons" id="Q5TH74"/>
<dbReference type="BioGRID-ORCS" id="90529">
    <property type="hits" value="11 hits in 1161 CRISPR screens"/>
</dbReference>
<dbReference type="GenomeRNAi" id="90529"/>
<dbReference type="Pharos" id="Q5TH74">
    <property type="development level" value="Tbio"/>
</dbReference>
<dbReference type="PRO" id="PR:Q5TH74"/>
<dbReference type="Proteomes" id="UP000005640">
    <property type="component" value="Chromosome 1"/>
</dbReference>
<dbReference type="RNAct" id="Q5TH74">
    <property type="molecule type" value="protein"/>
</dbReference>
<dbReference type="Bgee" id="ENSG00000001460">
    <property type="expression patterns" value="Expressed in right testis and 124 other cell types or tissues"/>
</dbReference>
<dbReference type="ExpressionAtlas" id="Q5TH74">
    <property type="expression patterns" value="baseline and differential"/>
</dbReference>
<dbReference type="GO" id="GO:0005739">
    <property type="term" value="C:mitochondrion"/>
    <property type="evidence" value="ECO:0007669"/>
    <property type="project" value="GOC"/>
</dbReference>
<dbReference type="GO" id="GO:0005634">
    <property type="term" value="C:nucleus"/>
    <property type="evidence" value="ECO:0007669"/>
    <property type="project" value="UniProtKB-SubCell"/>
</dbReference>
<dbReference type="GO" id="GO:0043065">
    <property type="term" value="P:positive regulation of apoptotic process"/>
    <property type="evidence" value="ECO:0000315"/>
    <property type="project" value="UniProtKB"/>
</dbReference>
<dbReference type="GO" id="GO:1902110">
    <property type="term" value="P:positive regulation of mitochondrial membrane permeability involved in apoptotic process"/>
    <property type="evidence" value="ECO:0000315"/>
    <property type="project" value="UniProtKB"/>
</dbReference>
<dbReference type="InterPro" id="IPR010736">
    <property type="entry name" value="SHIPPO-rpt"/>
</dbReference>
<dbReference type="PANTHER" id="PTHR35678">
    <property type="entry name" value="PROTEIN STPG4"/>
    <property type="match status" value="1"/>
</dbReference>
<dbReference type="PANTHER" id="PTHR35678:SF1">
    <property type="entry name" value="PROTEIN STPG4"/>
    <property type="match status" value="1"/>
</dbReference>
<dbReference type="Pfam" id="PF07004">
    <property type="entry name" value="SHIPPO-rpt"/>
    <property type="match status" value="4"/>
</dbReference>
<proteinExistence type="evidence at protein level"/>
<feature type="chain" id="PRO_0000305170" description="O(6)-methylguanine-induced apoptosis 2">
    <location>
        <begin position="1"/>
        <end position="334"/>
    </location>
</feature>
<feature type="repeat" description="STPGR 1">
    <location>
        <begin position="67"/>
        <end position="74"/>
    </location>
</feature>
<feature type="repeat" description="STPGR 2">
    <location>
        <begin position="109"/>
        <end position="117"/>
    </location>
</feature>
<feature type="repeat" description="STPGR 3">
    <location>
        <begin position="148"/>
        <end position="155"/>
    </location>
</feature>
<feature type="repeat" description="STPGR 4">
    <location>
        <begin position="187"/>
        <end position="206"/>
    </location>
</feature>
<feature type="repeat" description="STPGR 5">
    <location>
        <begin position="225"/>
        <end position="257"/>
    </location>
</feature>
<feature type="repeat" description="STPGR 6">
    <location>
        <begin position="267"/>
        <end position="282"/>
    </location>
</feature>
<feature type="repeat" description="STPGR 7">
    <location>
        <begin position="306"/>
        <end position="316"/>
    </location>
</feature>
<feature type="region of interest" description="Disordered" evidence="2">
    <location>
        <begin position="1"/>
        <end position="60"/>
    </location>
</feature>
<feature type="compositionally biased region" description="Basic and acidic residues" evidence="2">
    <location>
        <begin position="7"/>
        <end position="20"/>
    </location>
</feature>
<feature type="compositionally biased region" description="Polar residues" evidence="2">
    <location>
        <begin position="29"/>
        <end position="42"/>
    </location>
</feature>
<feature type="modified residue" description="Phosphotyrosine" evidence="7">
    <location>
        <position position="72"/>
    </location>
</feature>
<feature type="splice variant" id="VSP_028252" description="In isoform 2." evidence="5">
    <location>
        <begin position="1"/>
        <end position="92"/>
    </location>
</feature>
<feature type="splice variant" id="VSP_028253" description="In isoform 3." evidence="5">
    <location>
        <begin position="1"/>
        <end position="47"/>
    </location>
</feature>
<feature type="splice variant" id="VSP_028254" description="In isoform 3." evidence="5">
    <original>EKKGFNSQAKRFPHK</original>
    <variation>MNALANIPDVPVKYR</variation>
    <location>
        <begin position="48"/>
        <end position="62"/>
    </location>
</feature>
<feature type="sequence variant" id="VAR_035614" description="In a breast cancer sample; somatic mutation." evidence="3">
    <original>S</original>
    <variation>F</variation>
    <location>
        <position position="254"/>
    </location>
</feature>
<feature type="sequence conflict" description="In Ref. 2; AAH35061." evidence="6" ref="2">
    <original>M</original>
    <variation>T</variation>
    <location>
        <position position="93"/>
    </location>
</feature>
<feature type="sequence conflict" description="In Ref. 2; AAH35061." evidence="6" ref="2">
    <original>I</original>
    <variation>V</variation>
    <location>
        <position position="105"/>
    </location>
</feature>
<feature type="sequence conflict" description="In Ref. 2; AAH17650." evidence="6" ref="2">
    <original>R</original>
    <variation>I</variation>
    <location>
        <position position="163"/>
    </location>
</feature>
<feature type="sequence conflict" description="In Ref. 2; AAH35061." evidence="6" ref="2">
    <original>P</original>
    <variation>T</variation>
    <location>
        <position position="233"/>
    </location>
</feature>
<feature type="sequence conflict" description="In Ref. 2; AAH35061." evidence="6" ref="2">
    <original>P</original>
    <variation>R</variation>
    <location>
        <position position="332"/>
    </location>
</feature>
<name>STPG1_HUMAN</name>
<evidence type="ECO:0000250" key="1"/>
<evidence type="ECO:0000256" key="2">
    <source>
        <dbReference type="SAM" id="MobiDB-lite"/>
    </source>
</evidence>
<evidence type="ECO:0000269" key="3">
    <source>
    </source>
</evidence>
<evidence type="ECO:0000269" key="4">
    <source>
    </source>
</evidence>
<evidence type="ECO:0000303" key="5">
    <source>
    </source>
</evidence>
<evidence type="ECO:0000305" key="6"/>
<evidence type="ECO:0007744" key="7">
    <source>
    </source>
</evidence>
<sequence>MDNSAQKNERTGKHPRRASEVQKGFTAAYPTQSSIPFKSQASVIPESEKKGFNSQAKRFPHKKNDIPGPGFYNVIHQSPVSNSVSLSKKGTCMFPSMCARLDTIISKYPAANAYTIPSDFISKRDFSNSCSSMFQLPSFMKALKFETPAPNYYNASVSCCKQRNNVCTRAGFMSKTQRGSFAFADKGPPPGHYDINESLVKQSPNTLMSCFKSKTNRGLKLTSTGPGPGYYNPSDCTKVPKKTLFPKNPILNFSAQPSPLPPKPPFPGPGQYEIVDYLGPRKHFISSASFVSNTSRWTAAPPQPGLPGPATYKPELPGKQSFLYNEDKKWIPVL</sequence>
<comment type="function">
    <text evidence="4">May positively contribute to the induction of apoptosis triggered by O(6)-methylguanine.</text>
</comment>
<comment type="subcellular location">
    <subcellularLocation>
        <location evidence="1">Cytoplasm</location>
    </subcellularLocation>
    <subcellularLocation>
        <location evidence="1">Nucleus</location>
    </subcellularLocation>
</comment>
<comment type="alternative products">
    <event type="alternative splicing"/>
    <isoform>
        <id>Q5TH74-1</id>
        <name>1</name>
        <sequence type="displayed"/>
    </isoform>
    <isoform>
        <id>Q5TH74-2</id>
        <name>2</name>
        <sequence type="described" ref="VSP_028252"/>
    </isoform>
    <isoform>
        <id>Q5TH74-3</id>
        <name>3</name>
        <sequence type="described" ref="VSP_028253 VSP_028254"/>
    </isoform>
</comment>
<comment type="similarity">
    <text evidence="6">Belongs to the STPG1 family.</text>
</comment>
<protein>
    <recommendedName>
        <fullName>O(6)-methylguanine-induced apoptosis 2</fullName>
        <shortName>MAPO2</shortName>
    </recommendedName>
    <alternativeName>
        <fullName>Sperm-tail PG-rich repeat-containing protein 1</fullName>
    </alternativeName>
</protein>
<gene>
    <name type="primary">STPG1</name>
    <name type="synonym">C1orf201</name>
</gene>